<feature type="chain" id="PRO_0000370114" description="3-deoxy-manno-octulosonate cytidylyltransferase">
    <location>
        <begin position="1"/>
        <end position="260"/>
    </location>
</feature>
<reference key="1">
    <citation type="journal article" date="2009" name="Environ. Microbiol.">
        <title>The genome of Polaromonas naphthalenivorans strain CJ2, isolated from coal tar-contaminated sediment, reveals physiological and metabolic versatility and evolution through extensive horizontal gene transfer.</title>
        <authorList>
            <person name="Yagi J.M."/>
            <person name="Sims D."/>
            <person name="Brettin T."/>
            <person name="Bruce D."/>
            <person name="Madsen E.L."/>
        </authorList>
    </citation>
    <scope>NUCLEOTIDE SEQUENCE [LARGE SCALE GENOMIC DNA]</scope>
    <source>
        <strain>CJ2</strain>
    </source>
</reference>
<name>KDSB_POLNA</name>
<proteinExistence type="inferred from homology"/>
<gene>
    <name evidence="1" type="primary">kdsB</name>
    <name type="ordered locus">Pnap_1921</name>
</gene>
<protein>
    <recommendedName>
        <fullName evidence="1">3-deoxy-manno-octulosonate cytidylyltransferase</fullName>
        <ecNumber evidence="1">2.7.7.38</ecNumber>
    </recommendedName>
    <alternativeName>
        <fullName evidence="1">CMP-2-keto-3-deoxyoctulosonic acid synthase</fullName>
        <shortName evidence="1">CKS</shortName>
        <shortName evidence="1">CMP-KDO synthase</shortName>
    </alternativeName>
</protein>
<keyword id="KW-0963">Cytoplasm</keyword>
<keyword id="KW-0448">Lipopolysaccharide biosynthesis</keyword>
<keyword id="KW-0548">Nucleotidyltransferase</keyword>
<keyword id="KW-1185">Reference proteome</keyword>
<keyword id="KW-0808">Transferase</keyword>
<accession>A1VNK3</accession>
<evidence type="ECO:0000255" key="1">
    <source>
        <dbReference type="HAMAP-Rule" id="MF_00057"/>
    </source>
</evidence>
<comment type="function">
    <text evidence="1">Activates KDO (a required 8-carbon sugar) for incorporation into bacterial lipopolysaccharide in Gram-negative bacteria.</text>
</comment>
<comment type="catalytic activity">
    <reaction evidence="1">
        <text>3-deoxy-alpha-D-manno-oct-2-ulosonate + CTP = CMP-3-deoxy-beta-D-manno-octulosonate + diphosphate</text>
        <dbReference type="Rhea" id="RHEA:23448"/>
        <dbReference type="ChEBI" id="CHEBI:33019"/>
        <dbReference type="ChEBI" id="CHEBI:37563"/>
        <dbReference type="ChEBI" id="CHEBI:85986"/>
        <dbReference type="ChEBI" id="CHEBI:85987"/>
        <dbReference type="EC" id="2.7.7.38"/>
    </reaction>
</comment>
<comment type="pathway">
    <text evidence="1">Nucleotide-sugar biosynthesis; CMP-3-deoxy-D-manno-octulosonate biosynthesis; CMP-3-deoxy-D-manno-octulosonate from 3-deoxy-D-manno-octulosonate and CTP: step 1/1.</text>
</comment>
<comment type="pathway">
    <text evidence="1">Bacterial outer membrane biogenesis; lipopolysaccharide biosynthesis.</text>
</comment>
<comment type="subcellular location">
    <subcellularLocation>
        <location evidence="1">Cytoplasm</location>
    </subcellularLocation>
</comment>
<comment type="similarity">
    <text evidence="1">Belongs to the KdsB family.</text>
</comment>
<dbReference type="EC" id="2.7.7.38" evidence="1"/>
<dbReference type="EMBL" id="CP000529">
    <property type="protein sequence ID" value="ABM37231.1"/>
    <property type="molecule type" value="Genomic_DNA"/>
</dbReference>
<dbReference type="RefSeq" id="WP_011801312.1">
    <property type="nucleotide sequence ID" value="NC_008781.1"/>
</dbReference>
<dbReference type="SMR" id="A1VNK3"/>
<dbReference type="STRING" id="365044.Pnap_1921"/>
<dbReference type="KEGG" id="pna:Pnap_1921"/>
<dbReference type="eggNOG" id="COG1212">
    <property type="taxonomic scope" value="Bacteria"/>
</dbReference>
<dbReference type="HOGENOM" id="CLU_065038_1_0_4"/>
<dbReference type="OrthoDB" id="9815559at2"/>
<dbReference type="UniPathway" id="UPA00030"/>
<dbReference type="UniPathway" id="UPA00358">
    <property type="reaction ID" value="UER00476"/>
</dbReference>
<dbReference type="Proteomes" id="UP000000644">
    <property type="component" value="Chromosome"/>
</dbReference>
<dbReference type="GO" id="GO:0005829">
    <property type="term" value="C:cytosol"/>
    <property type="evidence" value="ECO:0007669"/>
    <property type="project" value="TreeGrafter"/>
</dbReference>
<dbReference type="GO" id="GO:0008690">
    <property type="term" value="F:3-deoxy-manno-octulosonate cytidylyltransferase activity"/>
    <property type="evidence" value="ECO:0007669"/>
    <property type="project" value="UniProtKB-UniRule"/>
</dbReference>
<dbReference type="GO" id="GO:0033468">
    <property type="term" value="P:CMP-keto-3-deoxy-D-manno-octulosonic acid biosynthetic process"/>
    <property type="evidence" value="ECO:0007669"/>
    <property type="project" value="UniProtKB-UniRule"/>
</dbReference>
<dbReference type="GO" id="GO:0009103">
    <property type="term" value="P:lipopolysaccharide biosynthetic process"/>
    <property type="evidence" value="ECO:0007669"/>
    <property type="project" value="UniProtKB-UniRule"/>
</dbReference>
<dbReference type="CDD" id="cd02517">
    <property type="entry name" value="CMP-KDO-Synthetase"/>
    <property type="match status" value="1"/>
</dbReference>
<dbReference type="FunFam" id="3.90.550.10:FF:000011">
    <property type="entry name" value="3-deoxy-manno-octulosonate cytidylyltransferase"/>
    <property type="match status" value="1"/>
</dbReference>
<dbReference type="Gene3D" id="3.90.550.10">
    <property type="entry name" value="Spore Coat Polysaccharide Biosynthesis Protein SpsA, Chain A"/>
    <property type="match status" value="1"/>
</dbReference>
<dbReference type="HAMAP" id="MF_00057">
    <property type="entry name" value="KdsB"/>
    <property type="match status" value="1"/>
</dbReference>
<dbReference type="InterPro" id="IPR003329">
    <property type="entry name" value="Cytidylyl_trans"/>
</dbReference>
<dbReference type="InterPro" id="IPR004528">
    <property type="entry name" value="KdsB"/>
</dbReference>
<dbReference type="InterPro" id="IPR029044">
    <property type="entry name" value="Nucleotide-diphossugar_trans"/>
</dbReference>
<dbReference type="NCBIfam" id="TIGR00466">
    <property type="entry name" value="kdsB"/>
    <property type="match status" value="1"/>
</dbReference>
<dbReference type="NCBIfam" id="NF003952">
    <property type="entry name" value="PRK05450.1-5"/>
    <property type="match status" value="1"/>
</dbReference>
<dbReference type="NCBIfam" id="NF009905">
    <property type="entry name" value="PRK13368.1"/>
    <property type="match status" value="1"/>
</dbReference>
<dbReference type="PANTHER" id="PTHR42866">
    <property type="entry name" value="3-DEOXY-MANNO-OCTULOSONATE CYTIDYLYLTRANSFERASE"/>
    <property type="match status" value="1"/>
</dbReference>
<dbReference type="PANTHER" id="PTHR42866:SF2">
    <property type="entry name" value="3-DEOXY-MANNO-OCTULOSONATE CYTIDYLYLTRANSFERASE, MITOCHONDRIAL"/>
    <property type="match status" value="1"/>
</dbReference>
<dbReference type="Pfam" id="PF02348">
    <property type="entry name" value="CTP_transf_3"/>
    <property type="match status" value="1"/>
</dbReference>
<dbReference type="SUPFAM" id="SSF53448">
    <property type="entry name" value="Nucleotide-diphospho-sugar transferases"/>
    <property type="match status" value="1"/>
</dbReference>
<organism>
    <name type="scientific">Polaromonas naphthalenivorans (strain CJ2)</name>
    <dbReference type="NCBI Taxonomy" id="365044"/>
    <lineage>
        <taxon>Bacteria</taxon>
        <taxon>Pseudomonadati</taxon>
        <taxon>Pseudomonadota</taxon>
        <taxon>Betaproteobacteria</taxon>
        <taxon>Burkholderiales</taxon>
        <taxon>Comamonadaceae</taxon>
        <taxon>Polaromonas</taxon>
    </lineage>
</organism>
<sequence>MSFTVLIPARLASSRLPNKPLADINGVPMVVRVAQRALQSSALRTVVAADGTEIIEKCAAFGIQTVLTRVDHPSGSDRLAEACGLLGLLDDDIVVNVQGDEPLINPALIDAVARQLEARPDCAMSTAAHSIDELADFLNPNVVKVVLDARQTALYFSRAPIPAARDLAGQAWWKHGNLPKPLRHVGIYAYRVGFLRQFPQLPQAPLEQLESLEQLRALWHGYRIAVHITEHAPGPGVDTPEDLERVRRLVANDAHLADPV</sequence>